<dbReference type="EC" id="1.1.1.86" evidence="1"/>
<dbReference type="EMBL" id="AE014295">
    <property type="protein sequence ID" value="AAN24358.1"/>
    <property type="molecule type" value="Genomic_DNA"/>
</dbReference>
<dbReference type="RefSeq" id="NP_695722.1">
    <property type="nucleotide sequence ID" value="NC_004307.2"/>
</dbReference>
<dbReference type="SMR" id="Q8G6V1"/>
<dbReference type="STRING" id="206672.BL0531"/>
<dbReference type="EnsemblBacteria" id="AAN24358">
    <property type="protein sequence ID" value="AAN24358"/>
    <property type="gene ID" value="BL0531"/>
</dbReference>
<dbReference type="KEGG" id="blo:BL0531"/>
<dbReference type="PATRIC" id="fig|206672.9.peg.1272"/>
<dbReference type="HOGENOM" id="CLU_033821_0_1_11"/>
<dbReference type="OrthoDB" id="9804088at2"/>
<dbReference type="PhylomeDB" id="Q8G6V1"/>
<dbReference type="UniPathway" id="UPA00047">
    <property type="reaction ID" value="UER00056"/>
</dbReference>
<dbReference type="UniPathway" id="UPA00049">
    <property type="reaction ID" value="UER00060"/>
</dbReference>
<dbReference type="Proteomes" id="UP000000439">
    <property type="component" value="Chromosome"/>
</dbReference>
<dbReference type="GO" id="GO:0005829">
    <property type="term" value="C:cytosol"/>
    <property type="evidence" value="ECO:0007669"/>
    <property type="project" value="TreeGrafter"/>
</dbReference>
<dbReference type="GO" id="GO:0004455">
    <property type="term" value="F:ketol-acid reductoisomerase activity"/>
    <property type="evidence" value="ECO:0007669"/>
    <property type="project" value="UniProtKB-UniRule"/>
</dbReference>
<dbReference type="GO" id="GO:0000287">
    <property type="term" value="F:magnesium ion binding"/>
    <property type="evidence" value="ECO:0007669"/>
    <property type="project" value="UniProtKB-UniRule"/>
</dbReference>
<dbReference type="GO" id="GO:0050661">
    <property type="term" value="F:NADP binding"/>
    <property type="evidence" value="ECO:0007669"/>
    <property type="project" value="InterPro"/>
</dbReference>
<dbReference type="GO" id="GO:0009097">
    <property type="term" value="P:isoleucine biosynthetic process"/>
    <property type="evidence" value="ECO:0007669"/>
    <property type="project" value="UniProtKB-UniRule"/>
</dbReference>
<dbReference type="GO" id="GO:0009099">
    <property type="term" value="P:L-valine biosynthetic process"/>
    <property type="evidence" value="ECO:0007669"/>
    <property type="project" value="UniProtKB-UniRule"/>
</dbReference>
<dbReference type="FunFam" id="3.40.50.720:FF:000023">
    <property type="entry name" value="Ketol-acid reductoisomerase (NADP(+))"/>
    <property type="match status" value="1"/>
</dbReference>
<dbReference type="Gene3D" id="6.10.240.10">
    <property type="match status" value="1"/>
</dbReference>
<dbReference type="Gene3D" id="3.40.50.720">
    <property type="entry name" value="NAD(P)-binding Rossmann-like Domain"/>
    <property type="match status" value="1"/>
</dbReference>
<dbReference type="HAMAP" id="MF_00435">
    <property type="entry name" value="IlvC"/>
    <property type="match status" value="1"/>
</dbReference>
<dbReference type="InterPro" id="IPR008927">
    <property type="entry name" value="6-PGluconate_DH-like_C_sf"/>
</dbReference>
<dbReference type="InterPro" id="IPR013023">
    <property type="entry name" value="KARI"/>
</dbReference>
<dbReference type="InterPro" id="IPR000506">
    <property type="entry name" value="KARI_C"/>
</dbReference>
<dbReference type="InterPro" id="IPR013116">
    <property type="entry name" value="KARI_N"/>
</dbReference>
<dbReference type="InterPro" id="IPR014359">
    <property type="entry name" value="KARI_prok"/>
</dbReference>
<dbReference type="InterPro" id="IPR036291">
    <property type="entry name" value="NAD(P)-bd_dom_sf"/>
</dbReference>
<dbReference type="NCBIfam" id="TIGR00465">
    <property type="entry name" value="ilvC"/>
    <property type="match status" value="1"/>
</dbReference>
<dbReference type="NCBIfam" id="NF004017">
    <property type="entry name" value="PRK05479.1"/>
    <property type="match status" value="1"/>
</dbReference>
<dbReference type="PANTHER" id="PTHR21371">
    <property type="entry name" value="KETOL-ACID REDUCTOISOMERASE, MITOCHONDRIAL"/>
    <property type="match status" value="1"/>
</dbReference>
<dbReference type="PANTHER" id="PTHR21371:SF1">
    <property type="entry name" value="KETOL-ACID REDUCTOISOMERASE, MITOCHONDRIAL"/>
    <property type="match status" value="1"/>
</dbReference>
<dbReference type="Pfam" id="PF01450">
    <property type="entry name" value="KARI_C"/>
    <property type="match status" value="1"/>
</dbReference>
<dbReference type="Pfam" id="PF07991">
    <property type="entry name" value="KARI_N"/>
    <property type="match status" value="1"/>
</dbReference>
<dbReference type="PIRSF" id="PIRSF000116">
    <property type="entry name" value="IlvC_gammaproteo"/>
    <property type="match status" value="1"/>
</dbReference>
<dbReference type="SUPFAM" id="SSF48179">
    <property type="entry name" value="6-phosphogluconate dehydrogenase C-terminal domain-like"/>
    <property type="match status" value="1"/>
</dbReference>
<dbReference type="SUPFAM" id="SSF51735">
    <property type="entry name" value="NAD(P)-binding Rossmann-fold domains"/>
    <property type="match status" value="1"/>
</dbReference>
<dbReference type="PROSITE" id="PS51851">
    <property type="entry name" value="KARI_C"/>
    <property type="match status" value="1"/>
</dbReference>
<dbReference type="PROSITE" id="PS51850">
    <property type="entry name" value="KARI_N"/>
    <property type="match status" value="1"/>
</dbReference>
<name>ILVC2_BIFLO</name>
<organism>
    <name type="scientific">Bifidobacterium longum (strain NCC 2705)</name>
    <dbReference type="NCBI Taxonomy" id="206672"/>
    <lineage>
        <taxon>Bacteria</taxon>
        <taxon>Bacillati</taxon>
        <taxon>Actinomycetota</taxon>
        <taxon>Actinomycetes</taxon>
        <taxon>Bifidobacteriales</taxon>
        <taxon>Bifidobacteriaceae</taxon>
        <taxon>Bifidobacterium</taxon>
    </lineage>
</organism>
<accession>Q8G6V1</accession>
<reference key="1">
    <citation type="journal article" date="2002" name="Proc. Natl. Acad. Sci. U.S.A.">
        <title>The genome sequence of Bifidobacterium longum reflects its adaptation to the human gastrointestinal tract.</title>
        <authorList>
            <person name="Schell M.A."/>
            <person name="Karmirantzou M."/>
            <person name="Snel B."/>
            <person name="Vilanova D."/>
            <person name="Berger B."/>
            <person name="Pessi G."/>
            <person name="Zwahlen M.-C."/>
            <person name="Desiere F."/>
            <person name="Bork P."/>
            <person name="Delley M."/>
            <person name="Pridmore R.D."/>
            <person name="Arigoni F."/>
        </authorList>
    </citation>
    <scope>NUCLEOTIDE SEQUENCE [LARGE SCALE GENOMIC DNA]</scope>
    <source>
        <strain>NCC 2705</strain>
    </source>
</reference>
<evidence type="ECO:0000255" key="1">
    <source>
        <dbReference type="HAMAP-Rule" id="MF_00435"/>
    </source>
</evidence>
<evidence type="ECO:0000255" key="2">
    <source>
        <dbReference type="PROSITE-ProRule" id="PRU01197"/>
    </source>
</evidence>
<evidence type="ECO:0000255" key="3">
    <source>
        <dbReference type="PROSITE-ProRule" id="PRU01198"/>
    </source>
</evidence>
<evidence type="ECO:0000256" key="4">
    <source>
        <dbReference type="SAM" id="MobiDB-lite"/>
    </source>
</evidence>
<sequence length="350" mass="38552">MAATIWYEKDADLSVFDGKKVAILGYGSQGHAHALNLRDSGVDVVVGLRPTSKSVEFAKEQGLEVKPVGEAVAEADVVMILLPDQYQAAVYKKDVEPNLKPGAALAFAHGFNIHYGYIKPSEDHPVFMVAPKGPGHIVRREYAAGRGVPVVVAVEQDPDGKTWPLCLAYAKALGALRAGAIKTTFTEETETDLFGEQDVLMGGINHLCDLGFDVLTEAGYQPEIAYFEVFHELKMLVDLANEGGLNKARWSCSDTAQYGDYTSTVITEETKKRMQYQLKRIQDGSFAKEFMDDQAAGAPKFKKLQEEYSHPHLETVGPKLRAMFSWNNAEAKDKDETESFNGKIARTQVQ</sequence>
<proteinExistence type="inferred from homology"/>
<feature type="chain" id="PRO_0000151279" description="Ketol-acid reductoisomerase (NADP(+)) 2">
    <location>
        <begin position="1"/>
        <end position="350"/>
    </location>
</feature>
<feature type="domain" description="KARI N-terminal Rossmann" evidence="2">
    <location>
        <begin position="3"/>
        <end position="183"/>
    </location>
</feature>
<feature type="domain" description="KARI C-terminal knotted" evidence="3">
    <location>
        <begin position="184"/>
        <end position="327"/>
    </location>
</feature>
<feature type="region of interest" description="Disordered" evidence="4">
    <location>
        <begin position="331"/>
        <end position="350"/>
    </location>
</feature>
<feature type="active site" evidence="1">
    <location>
        <position position="109"/>
    </location>
</feature>
<feature type="binding site" evidence="1">
    <location>
        <begin position="26"/>
        <end position="29"/>
    </location>
    <ligand>
        <name>NADP(+)</name>
        <dbReference type="ChEBI" id="CHEBI:58349"/>
    </ligand>
</feature>
<feature type="binding site" evidence="1">
    <location>
        <position position="49"/>
    </location>
    <ligand>
        <name>NADP(+)</name>
        <dbReference type="ChEBI" id="CHEBI:58349"/>
    </ligand>
</feature>
<feature type="binding site" evidence="1">
    <location>
        <position position="52"/>
    </location>
    <ligand>
        <name>NADP(+)</name>
        <dbReference type="ChEBI" id="CHEBI:58349"/>
    </ligand>
</feature>
<feature type="binding site" evidence="1">
    <location>
        <position position="54"/>
    </location>
    <ligand>
        <name>NADP(+)</name>
        <dbReference type="ChEBI" id="CHEBI:58349"/>
    </ligand>
</feature>
<feature type="binding site" evidence="1">
    <location>
        <begin position="84"/>
        <end position="87"/>
    </location>
    <ligand>
        <name>NADP(+)</name>
        <dbReference type="ChEBI" id="CHEBI:58349"/>
    </ligand>
</feature>
<feature type="binding site" evidence="1">
    <location>
        <position position="135"/>
    </location>
    <ligand>
        <name>NADP(+)</name>
        <dbReference type="ChEBI" id="CHEBI:58349"/>
    </ligand>
</feature>
<feature type="binding site" evidence="1">
    <location>
        <position position="192"/>
    </location>
    <ligand>
        <name>Mg(2+)</name>
        <dbReference type="ChEBI" id="CHEBI:18420"/>
        <label>1</label>
    </ligand>
</feature>
<feature type="binding site" evidence="1">
    <location>
        <position position="192"/>
    </location>
    <ligand>
        <name>Mg(2+)</name>
        <dbReference type="ChEBI" id="CHEBI:18420"/>
        <label>2</label>
    </ligand>
</feature>
<feature type="binding site" evidence="1">
    <location>
        <position position="196"/>
    </location>
    <ligand>
        <name>Mg(2+)</name>
        <dbReference type="ChEBI" id="CHEBI:18420"/>
        <label>1</label>
    </ligand>
</feature>
<feature type="binding site" evidence="1">
    <location>
        <position position="228"/>
    </location>
    <ligand>
        <name>Mg(2+)</name>
        <dbReference type="ChEBI" id="CHEBI:18420"/>
        <label>2</label>
    </ligand>
</feature>
<feature type="binding site" evidence="1">
    <location>
        <position position="232"/>
    </location>
    <ligand>
        <name>Mg(2+)</name>
        <dbReference type="ChEBI" id="CHEBI:18420"/>
        <label>2</label>
    </ligand>
</feature>
<feature type="binding site" evidence="1">
    <location>
        <position position="253"/>
    </location>
    <ligand>
        <name>substrate</name>
    </ligand>
</feature>
<protein>
    <recommendedName>
        <fullName evidence="1">Ketol-acid reductoisomerase (NADP(+)) 2</fullName>
        <shortName evidence="1">KARI 2</shortName>
        <ecNumber evidence="1">1.1.1.86</ecNumber>
    </recommendedName>
    <alternativeName>
        <fullName evidence="1">Acetohydroxy-acid isomeroreductase 2</fullName>
        <shortName evidence="1">AHIR 2</shortName>
    </alternativeName>
    <alternativeName>
        <fullName evidence="1">Alpha-keto-beta-hydroxylacyl reductoisomerase 2</fullName>
    </alternativeName>
    <alternativeName>
        <fullName evidence="1">Ketol-acid reductoisomerase type 1</fullName>
    </alternativeName>
    <alternativeName>
        <fullName evidence="1">Ketol-acid reductoisomerase type I</fullName>
    </alternativeName>
</protein>
<comment type="function">
    <text evidence="1">Involved in the biosynthesis of branched-chain amino acids (BCAA). Catalyzes an alkyl-migration followed by a ketol-acid reduction of (S)-2-acetolactate (S2AL) to yield (R)-2,3-dihydroxy-isovalerate. In the isomerase reaction, S2AL is rearranged via a Mg-dependent methyl migration to produce 3-hydroxy-3-methyl-2-ketobutyrate (HMKB). In the reductase reaction, this 2-ketoacid undergoes a metal-dependent reduction by NADPH to yield (R)-2,3-dihydroxy-isovalerate.</text>
</comment>
<comment type="catalytic activity">
    <reaction evidence="1">
        <text>(2R)-2,3-dihydroxy-3-methylbutanoate + NADP(+) = (2S)-2-acetolactate + NADPH + H(+)</text>
        <dbReference type="Rhea" id="RHEA:22068"/>
        <dbReference type="ChEBI" id="CHEBI:15378"/>
        <dbReference type="ChEBI" id="CHEBI:49072"/>
        <dbReference type="ChEBI" id="CHEBI:57783"/>
        <dbReference type="ChEBI" id="CHEBI:58349"/>
        <dbReference type="ChEBI" id="CHEBI:58476"/>
        <dbReference type="EC" id="1.1.1.86"/>
    </reaction>
</comment>
<comment type="catalytic activity">
    <reaction evidence="1">
        <text>(2R,3R)-2,3-dihydroxy-3-methylpentanoate + NADP(+) = (S)-2-ethyl-2-hydroxy-3-oxobutanoate + NADPH + H(+)</text>
        <dbReference type="Rhea" id="RHEA:13493"/>
        <dbReference type="ChEBI" id="CHEBI:15378"/>
        <dbReference type="ChEBI" id="CHEBI:49256"/>
        <dbReference type="ChEBI" id="CHEBI:49258"/>
        <dbReference type="ChEBI" id="CHEBI:57783"/>
        <dbReference type="ChEBI" id="CHEBI:58349"/>
        <dbReference type="EC" id="1.1.1.86"/>
    </reaction>
</comment>
<comment type="cofactor">
    <cofactor evidence="1">
        <name>Mg(2+)</name>
        <dbReference type="ChEBI" id="CHEBI:18420"/>
    </cofactor>
    <text evidence="1">Binds 2 magnesium ions per subunit.</text>
</comment>
<comment type="pathway">
    <text evidence="1">Amino-acid biosynthesis; L-isoleucine biosynthesis; L-isoleucine from 2-oxobutanoate: step 2/4.</text>
</comment>
<comment type="pathway">
    <text evidence="1">Amino-acid biosynthesis; L-valine biosynthesis; L-valine from pyruvate: step 2/4.</text>
</comment>
<comment type="similarity">
    <text evidence="1">Belongs to the ketol-acid reductoisomerase family.</text>
</comment>
<keyword id="KW-0028">Amino-acid biosynthesis</keyword>
<keyword id="KW-0100">Branched-chain amino acid biosynthesis</keyword>
<keyword id="KW-0460">Magnesium</keyword>
<keyword id="KW-0479">Metal-binding</keyword>
<keyword id="KW-0521">NADP</keyword>
<keyword id="KW-0560">Oxidoreductase</keyword>
<keyword id="KW-1185">Reference proteome</keyword>
<gene>
    <name evidence="1" type="primary">ilvC2</name>
    <name type="ordered locus">BL0531</name>
</gene>